<gene>
    <name evidence="1" type="primary">apaH</name>
    <name type="ordered locus">XOO3540</name>
</gene>
<protein>
    <recommendedName>
        <fullName evidence="1">Bis(5'-nucleosyl)-tetraphosphatase, symmetrical</fullName>
        <ecNumber evidence="1">3.6.1.41</ecNumber>
    </recommendedName>
    <alternativeName>
        <fullName evidence="1">Ap4A hydrolase</fullName>
    </alternativeName>
    <alternativeName>
        <fullName evidence="1">Diadenosine 5',5'''-P1,P4-tetraphosphate pyrophosphohydrolase</fullName>
    </alternativeName>
    <alternativeName>
        <fullName evidence="1">Diadenosine tetraphosphatase</fullName>
    </alternativeName>
</protein>
<organism>
    <name type="scientific">Xanthomonas oryzae pv. oryzae (strain MAFF 311018)</name>
    <dbReference type="NCBI Taxonomy" id="342109"/>
    <lineage>
        <taxon>Bacteria</taxon>
        <taxon>Pseudomonadati</taxon>
        <taxon>Pseudomonadota</taxon>
        <taxon>Gammaproteobacteria</taxon>
        <taxon>Lysobacterales</taxon>
        <taxon>Lysobacteraceae</taxon>
        <taxon>Xanthomonas</taxon>
    </lineage>
</organism>
<proteinExistence type="inferred from homology"/>
<sequence>MSVWAIGDLQGCYDITQRLLEKINFDPAQDTLWFCGDLVNRGGQSLETLRLVHSLRAHSVVVLGNHDLSLLAIGARSEEEQRKVNPDLLRIVLAKDRDALLDWLRMQKLAHVDRALGWMMIHAGLAPKWTTQMAEKHAREVEQQLQGGGYRKLLRNMYGDQPGWSPGLIGYDRSRAIINLFTRMRYCTPRGRIATDDKGTPGTQAQGLYPWFEVPGRVERDLKIVCGHWSALGLTITQGVHAIDTGAVWGGKLTALQLDTDELRVVQVPGREVTGPAPVARAPRRPRERLGRQRSRGNRGNAGNTAVPAKPPVDTPQD</sequence>
<reference key="1">
    <citation type="journal article" date="2005" name="Jpn. Agric. Res. Q.">
        <title>Genome sequence of Xanthomonas oryzae pv. oryzae suggests contribution of large numbers of effector genes and insertion sequences to its race diversity.</title>
        <authorList>
            <person name="Ochiai H."/>
            <person name="Inoue Y."/>
            <person name="Takeya M."/>
            <person name="Sasaki A."/>
            <person name="Kaku H."/>
        </authorList>
    </citation>
    <scope>NUCLEOTIDE SEQUENCE [LARGE SCALE GENOMIC DNA]</scope>
    <source>
        <strain>MAFF 311018</strain>
    </source>
</reference>
<keyword id="KW-0378">Hydrolase</keyword>
<name>APAH_XANOM</name>
<feature type="chain" id="PRO_1000012106" description="Bis(5'-nucleosyl)-tetraphosphatase, symmetrical">
    <location>
        <begin position="1"/>
        <end position="318"/>
    </location>
</feature>
<feature type="region of interest" description="Disordered" evidence="2">
    <location>
        <begin position="269"/>
        <end position="318"/>
    </location>
</feature>
<feature type="compositionally biased region" description="Basic residues" evidence="2">
    <location>
        <begin position="282"/>
        <end position="297"/>
    </location>
</feature>
<feature type="compositionally biased region" description="Pro residues" evidence="2">
    <location>
        <begin position="309"/>
        <end position="318"/>
    </location>
</feature>
<dbReference type="EC" id="3.6.1.41" evidence="1"/>
<dbReference type="EMBL" id="AP008229">
    <property type="protein sequence ID" value="BAE70295.1"/>
    <property type="molecule type" value="Genomic_DNA"/>
</dbReference>
<dbReference type="RefSeq" id="WP_011409340.1">
    <property type="nucleotide sequence ID" value="NC_007705.1"/>
</dbReference>
<dbReference type="SMR" id="Q2NZI2"/>
<dbReference type="KEGG" id="xom:XOO3540"/>
<dbReference type="HOGENOM" id="CLU_056184_0_0_6"/>
<dbReference type="GO" id="GO:0008803">
    <property type="term" value="F:bis(5'-nucleosyl)-tetraphosphatase (symmetrical) activity"/>
    <property type="evidence" value="ECO:0007669"/>
    <property type="project" value="UniProtKB-UniRule"/>
</dbReference>
<dbReference type="CDD" id="cd07422">
    <property type="entry name" value="MPP_ApaH"/>
    <property type="match status" value="1"/>
</dbReference>
<dbReference type="Gene3D" id="3.60.21.10">
    <property type="match status" value="1"/>
</dbReference>
<dbReference type="HAMAP" id="MF_00199">
    <property type="entry name" value="ApaH"/>
    <property type="match status" value="1"/>
</dbReference>
<dbReference type="InterPro" id="IPR004617">
    <property type="entry name" value="ApaH"/>
</dbReference>
<dbReference type="InterPro" id="IPR004843">
    <property type="entry name" value="Calcineurin-like_PHP_ApaH"/>
</dbReference>
<dbReference type="InterPro" id="IPR029052">
    <property type="entry name" value="Metallo-depent_PP-like"/>
</dbReference>
<dbReference type="InterPro" id="IPR006186">
    <property type="entry name" value="Ser/Thr-sp_prot-phosphatase"/>
</dbReference>
<dbReference type="NCBIfam" id="TIGR00668">
    <property type="entry name" value="apaH"/>
    <property type="match status" value="1"/>
</dbReference>
<dbReference type="NCBIfam" id="NF001204">
    <property type="entry name" value="PRK00166.1"/>
    <property type="match status" value="1"/>
</dbReference>
<dbReference type="PANTHER" id="PTHR40942">
    <property type="match status" value="1"/>
</dbReference>
<dbReference type="PANTHER" id="PTHR40942:SF4">
    <property type="entry name" value="CYTOCHROME C5"/>
    <property type="match status" value="1"/>
</dbReference>
<dbReference type="Pfam" id="PF00149">
    <property type="entry name" value="Metallophos"/>
    <property type="match status" value="1"/>
</dbReference>
<dbReference type="PIRSF" id="PIRSF000903">
    <property type="entry name" value="B5n-ttraPtase_sm"/>
    <property type="match status" value="1"/>
</dbReference>
<dbReference type="PRINTS" id="PR00114">
    <property type="entry name" value="STPHPHTASE"/>
</dbReference>
<dbReference type="SUPFAM" id="SSF56300">
    <property type="entry name" value="Metallo-dependent phosphatases"/>
    <property type="match status" value="1"/>
</dbReference>
<comment type="function">
    <text evidence="1">Hydrolyzes diadenosine 5',5'''-P1,P4-tetraphosphate to yield ADP.</text>
</comment>
<comment type="catalytic activity">
    <reaction evidence="1">
        <text>P(1),P(4)-bis(5'-adenosyl) tetraphosphate + H2O = 2 ADP + 2 H(+)</text>
        <dbReference type="Rhea" id="RHEA:24252"/>
        <dbReference type="ChEBI" id="CHEBI:15377"/>
        <dbReference type="ChEBI" id="CHEBI:15378"/>
        <dbReference type="ChEBI" id="CHEBI:58141"/>
        <dbReference type="ChEBI" id="CHEBI:456216"/>
        <dbReference type="EC" id="3.6.1.41"/>
    </reaction>
</comment>
<comment type="similarity">
    <text evidence="1">Belongs to the Ap4A hydrolase family.</text>
</comment>
<evidence type="ECO:0000255" key="1">
    <source>
        <dbReference type="HAMAP-Rule" id="MF_00199"/>
    </source>
</evidence>
<evidence type="ECO:0000256" key="2">
    <source>
        <dbReference type="SAM" id="MobiDB-lite"/>
    </source>
</evidence>
<accession>Q2NZI2</accession>